<name>M2_I79A8</name>
<feature type="chain" id="PRO_0000326368" description="Matrix protein 2">
    <location>
        <begin position="1"/>
        <end position="97"/>
    </location>
</feature>
<feature type="topological domain" description="Virion surface" evidence="1">
    <location>
        <begin position="1"/>
        <end position="22"/>
    </location>
</feature>
<feature type="transmembrane region" description="Helical; Signal-anchor for type III membrane protein" evidence="1">
    <location>
        <begin position="23"/>
        <end position="43"/>
    </location>
</feature>
<feature type="topological domain" description="Intravirion" evidence="1">
    <location>
        <begin position="44"/>
        <end position="97"/>
    </location>
</feature>
<feature type="region of interest" description="Disordered" evidence="2">
    <location>
        <begin position="60"/>
        <end position="84"/>
    </location>
</feature>
<feature type="site" description="Essential for channel activity, possibly by being protonated during channel activation, and by forming the channel gate and the selective filter" evidence="1">
    <location>
        <position position="37"/>
    </location>
</feature>
<feature type="site" description="Seems to be involved in pH gating" evidence="1">
    <location>
        <position position="41"/>
    </location>
</feature>
<feature type="modified residue" description="Phosphoserine; by host" evidence="1">
    <location>
        <position position="64"/>
    </location>
</feature>
<feature type="modified residue" description="Phosphoserine; by host" evidence="1">
    <location>
        <position position="82"/>
    </location>
</feature>
<feature type="lipid moiety-binding region" description="S-palmitoyl cysteine; by host" evidence="1">
    <location>
        <position position="50"/>
    </location>
</feature>
<feature type="glycosylation site" description="N-linked (GlcNAc...) asparagine; by host" evidence="1">
    <location>
        <position position="20"/>
    </location>
</feature>
<feature type="disulfide bond" description="Interchain (with C-17)" evidence="1">
    <location>
        <position position="17"/>
    </location>
</feature>
<feature type="disulfide bond" description="Interchain (with C-19)" evidence="1">
    <location>
        <position position="19"/>
    </location>
</feature>
<comment type="function">
    <text evidence="1">Forms a proton-selective ion channel that is necessary for the efficient release of the viral genome during virus entry. After attaching to the cell surface, the virion enters the cell by endocytosis. Acidification of the endosome triggers M2 ion channel activity. The influx of protons into virion interior is believed to disrupt interactions between the viral ribonucleoprotein (RNP), matrix protein 1 (M1), and lipid bilayers, thereby freeing the viral genome from interaction with viral proteins and enabling RNA segments to migrate to the host cell nucleus, where influenza virus RNA transcription and replication occur. Also plays a role in viral proteins secretory pathway. Elevates the intravesicular pH of normally acidic compartments, such as trans-Golgi network, preventing newly formed hemagglutinin from premature switching to the fusion-active conformation.</text>
</comment>
<comment type="activity regulation">
    <text>The M2 protein from most influenza A strains is inhibited by amantadine and rimantadine, resulting in viral uncoating incapacity. Emergence of amantadine-resistant variants is usually rapid.</text>
</comment>
<comment type="subunit">
    <text evidence="1">Homotetramer; composed of two disulfide-linked dimers held together by non-covalent interactions. May interact with matrix protein 1.</text>
</comment>
<comment type="subcellular location">
    <subcellularLocation>
        <location evidence="1">Virion membrane</location>
    </subcellularLocation>
    <subcellularLocation>
        <location evidence="1">Host apical cell membrane</location>
        <topology evidence="1">Single-pass type III membrane protein</topology>
    </subcellularLocation>
    <text evidence="1">Abundantly expressed at the apical plasma membrane in infected polarized epithelial cells, in close proximity to budding and assembled virions. Minor component of virions (only 16-20 molecules/virion).</text>
</comment>
<comment type="alternative products">
    <event type="alternative splicing"/>
    <isoform>
        <id>Q76V04-1</id>
        <name>M2</name>
        <sequence type="displayed"/>
    </isoform>
    <isoform>
        <id>Q76V03-1</id>
        <name>M1</name>
        <sequence type="external"/>
    </isoform>
    <text>Only the first 9 residues are shared by the 2 isoforms.</text>
</comment>
<comment type="domain">
    <text evidence="1">Cytoplasmic tail plays an important role in virion assembly and morphogenesis.</text>
</comment>
<comment type="miscellaneous">
    <text evidence="1">When the channel is activated, one or more imidazole moieties of His-37 probably become bi-protonated.</text>
</comment>
<comment type="similarity">
    <text evidence="1">Belongs to the influenza viruses matrix protein M2 family.</text>
</comment>
<accession>Q76V04</accession>
<reference key="1">
    <citation type="journal article" date="1991" name="J. Virol.">
        <title>Evolutionary analysis of the influenza A virus M gene with comparison of the M1 and M2 proteins.</title>
        <authorList>
            <person name="Ito T."/>
            <person name="Gorman O.T."/>
            <person name="Kawaoka Y."/>
            <person name="Bean W.J."/>
            <person name="Webster R.G."/>
        </authorList>
    </citation>
    <scope>NUCLEOTIDE SEQUENCE [GENOMIC RNA]</scope>
</reference>
<keyword id="KW-0025">Alternative splicing</keyword>
<keyword id="KW-1015">Disulfide bond</keyword>
<keyword id="KW-0325">Glycoprotein</keyword>
<keyword id="KW-1032">Host cell membrane</keyword>
<keyword id="KW-1043">Host membrane</keyword>
<keyword id="KW-0945">Host-virus interaction</keyword>
<keyword id="KW-0375">Hydrogen ion transport</keyword>
<keyword id="KW-1083">Inhibition of host autophagy by virus</keyword>
<keyword id="KW-0407">Ion channel</keyword>
<keyword id="KW-0406">Ion transport</keyword>
<keyword id="KW-0449">Lipoprotein</keyword>
<keyword id="KW-0472">Membrane</keyword>
<keyword id="KW-0564">Palmitate</keyword>
<keyword id="KW-0597">Phosphoprotein</keyword>
<keyword id="KW-0735">Signal-anchor</keyword>
<keyword id="KW-0812">Transmembrane</keyword>
<keyword id="KW-1133">Transmembrane helix</keyword>
<keyword id="KW-0813">Transport</keyword>
<keyword id="KW-1182">Viral ion channel</keyword>
<keyword id="KW-0946">Virion</keyword>
<dbReference type="EMBL" id="M63530">
    <property type="protein sequence ID" value="AAA43299.1"/>
    <property type="molecule type" value="Genomic_RNA"/>
</dbReference>
<dbReference type="SMR" id="Q76V04"/>
<dbReference type="GlyCosmos" id="Q76V04">
    <property type="glycosylation" value="1 site, No reported glycans"/>
</dbReference>
<dbReference type="GO" id="GO:0020002">
    <property type="term" value="C:host cell plasma membrane"/>
    <property type="evidence" value="ECO:0007669"/>
    <property type="project" value="UniProtKB-SubCell"/>
</dbReference>
<dbReference type="GO" id="GO:0016020">
    <property type="term" value="C:membrane"/>
    <property type="evidence" value="ECO:0007669"/>
    <property type="project" value="UniProtKB-UniRule"/>
</dbReference>
<dbReference type="GO" id="GO:0055036">
    <property type="term" value="C:virion membrane"/>
    <property type="evidence" value="ECO:0007669"/>
    <property type="project" value="UniProtKB-SubCell"/>
</dbReference>
<dbReference type="GO" id="GO:0005216">
    <property type="term" value="F:monoatomic ion channel activity"/>
    <property type="evidence" value="ECO:0007669"/>
    <property type="project" value="UniProtKB-UniRule"/>
</dbReference>
<dbReference type="GO" id="GO:0015078">
    <property type="term" value="F:proton transmembrane transporter activity"/>
    <property type="evidence" value="ECO:0007669"/>
    <property type="project" value="UniProtKB-UniRule"/>
</dbReference>
<dbReference type="GO" id="GO:0051259">
    <property type="term" value="P:protein complex oligomerization"/>
    <property type="evidence" value="ECO:0007669"/>
    <property type="project" value="UniProtKB-UniRule"/>
</dbReference>
<dbReference type="GO" id="GO:0044694">
    <property type="term" value="P:symbiont genome entry into host cell via pore formation in plasma membrane"/>
    <property type="evidence" value="ECO:0007669"/>
    <property type="project" value="UniProtKB-UniRule"/>
</dbReference>
<dbReference type="GO" id="GO:0140321">
    <property type="term" value="P:symbiont-mediated suppression of host autophagy"/>
    <property type="evidence" value="ECO:0007669"/>
    <property type="project" value="UniProtKB-KW"/>
</dbReference>
<dbReference type="Gene3D" id="6.10.250.1640">
    <property type="match status" value="1"/>
</dbReference>
<dbReference type="HAMAP" id="MF_04069">
    <property type="entry name" value="INFV_M2"/>
    <property type="match status" value="1"/>
</dbReference>
<dbReference type="InterPro" id="IPR002089">
    <property type="entry name" value="Flu_M2"/>
</dbReference>
<dbReference type="Pfam" id="PF00599">
    <property type="entry name" value="Flu_M2"/>
    <property type="match status" value="1"/>
</dbReference>
<organismHost>
    <name type="scientific">Aves</name>
    <dbReference type="NCBI Taxonomy" id="8782"/>
</organismHost>
<organism>
    <name type="scientific">Influenza A virus (strain A/Gull/Maryland/1815/1979 H13N6)</name>
    <dbReference type="NCBI Taxonomy" id="385601"/>
    <lineage>
        <taxon>Viruses</taxon>
        <taxon>Riboviria</taxon>
        <taxon>Orthornavirae</taxon>
        <taxon>Negarnaviricota</taxon>
        <taxon>Polyploviricotina</taxon>
        <taxon>Insthoviricetes</taxon>
        <taxon>Articulavirales</taxon>
        <taxon>Orthomyxoviridae</taxon>
        <taxon>Alphainfluenzavirus</taxon>
        <taxon>Alphainfluenzavirus influenzae</taxon>
        <taxon>Influenza A virus</taxon>
    </lineage>
</organism>
<protein>
    <recommendedName>
        <fullName evidence="1">Matrix protein 2</fullName>
    </recommendedName>
    <alternativeName>
        <fullName evidence="1">Proton channel protein M2</fullName>
    </alternativeName>
</protein>
<evidence type="ECO:0000255" key="1">
    <source>
        <dbReference type="HAMAP-Rule" id="MF_04069"/>
    </source>
</evidence>
<evidence type="ECO:0000256" key="2">
    <source>
        <dbReference type="SAM" id="MobiDB-lite"/>
    </source>
</evidence>
<sequence>MSLLTEVETHTRSGWECRCNDSSDPLVIAASIIGILHLILWILDRLFFKCIYRRLKYGLKRGPSTEGVPESMREEYQQEKQSAVDVDDGHFVNIELE</sequence>
<proteinExistence type="inferred from homology"/>
<gene>
    <name evidence="1" type="primary">M</name>
</gene>